<sequence>MNIVLMGLPGAGKGTQADKIVEKYAIPHISTGDMFRAAIKEGTELGLQAKSFMDQGALVPDEVTIGIVRERLAKPDCEKGFLLDGFPRTVPQAEALDSILADLGKAIEHTLNIQVEKDELIARLSGRRICKTCGASYHLIFNPPAEEGKCDKDGGELYTRADDNPDTVANRLEVNMKQAQPLLDFYQAKGVLTNIDGQQDINKVFADLDALLQSSRS</sequence>
<gene>
    <name evidence="1" type="primary">adk</name>
    <name type="ordered locus">Bsph_4593</name>
</gene>
<comment type="function">
    <text evidence="1">Catalyzes the reversible transfer of the terminal phosphate group between ATP and AMP. Plays an important role in cellular energy homeostasis and in adenine nucleotide metabolism.</text>
</comment>
<comment type="catalytic activity">
    <reaction evidence="1">
        <text>AMP + ATP = 2 ADP</text>
        <dbReference type="Rhea" id="RHEA:12973"/>
        <dbReference type="ChEBI" id="CHEBI:30616"/>
        <dbReference type="ChEBI" id="CHEBI:456215"/>
        <dbReference type="ChEBI" id="CHEBI:456216"/>
        <dbReference type="EC" id="2.7.4.3"/>
    </reaction>
</comment>
<comment type="pathway">
    <text evidence="1">Purine metabolism; AMP biosynthesis via salvage pathway; AMP from ADP: step 1/1.</text>
</comment>
<comment type="subunit">
    <text evidence="1">Monomer.</text>
</comment>
<comment type="subcellular location">
    <subcellularLocation>
        <location evidence="1">Cytoplasm</location>
    </subcellularLocation>
</comment>
<comment type="domain">
    <text evidence="1">Consists of three domains, a large central CORE domain and two small peripheral domains, NMPbind and LID, which undergo movements during catalysis. The LID domain closes over the site of phosphoryl transfer upon ATP binding. Assembling and dissambling the active center during each catalytic cycle provides an effective means to prevent ATP hydrolysis. Some bacteria have evolved a zinc-coordinating structure that stabilizes the LID domain.</text>
</comment>
<comment type="similarity">
    <text evidence="1">Belongs to the adenylate kinase family.</text>
</comment>
<evidence type="ECO:0000255" key="1">
    <source>
        <dbReference type="HAMAP-Rule" id="MF_00235"/>
    </source>
</evidence>
<organism>
    <name type="scientific">Lysinibacillus sphaericus (strain C3-41)</name>
    <dbReference type="NCBI Taxonomy" id="444177"/>
    <lineage>
        <taxon>Bacteria</taxon>
        <taxon>Bacillati</taxon>
        <taxon>Bacillota</taxon>
        <taxon>Bacilli</taxon>
        <taxon>Bacillales</taxon>
        <taxon>Bacillaceae</taxon>
        <taxon>Lysinibacillus</taxon>
    </lineage>
</organism>
<name>KAD_LYSSC</name>
<dbReference type="EC" id="2.7.4.3" evidence="1"/>
<dbReference type="EMBL" id="CP000817">
    <property type="protein sequence ID" value="ACA42037.1"/>
    <property type="molecule type" value="Genomic_DNA"/>
</dbReference>
<dbReference type="RefSeq" id="WP_012296052.1">
    <property type="nucleotide sequence ID" value="NC_010382.1"/>
</dbReference>
<dbReference type="SMR" id="B1HMV9"/>
<dbReference type="EnsemblBacteria" id="ACA42037">
    <property type="protein sequence ID" value="ACA42037"/>
    <property type="gene ID" value="Bsph_4593"/>
</dbReference>
<dbReference type="KEGG" id="lsp:Bsph_4593"/>
<dbReference type="HOGENOM" id="CLU_032354_1_2_9"/>
<dbReference type="UniPathway" id="UPA00588">
    <property type="reaction ID" value="UER00649"/>
</dbReference>
<dbReference type="Proteomes" id="UP000002164">
    <property type="component" value="Chromosome"/>
</dbReference>
<dbReference type="GO" id="GO:0005737">
    <property type="term" value="C:cytoplasm"/>
    <property type="evidence" value="ECO:0007669"/>
    <property type="project" value="UniProtKB-SubCell"/>
</dbReference>
<dbReference type="GO" id="GO:0004017">
    <property type="term" value="F:adenylate kinase activity"/>
    <property type="evidence" value="ECO:0007669"/>
    <property type="project" value="UniProtKB-UniRule"/>
</dbReference>
<dbReference type="GO" id="GO:0005524">
    <property type="term" value="F:ATP binding"/>
    <property type="evidence" value="ECO:0007669"/>
    <property type="project" value="UniProtKB-UniRule"/>
</dbReference>
<dbReference type="GO" id="GO:0008270">
    <property type="term" value="F:zinc ion binding"/>
    <property type="evidence" value="ECO:0007669"/>
    <property type="project" value="UniProtKB-UniRule"/>
</dbReference>
<dbReference type="GO" id="GO:0044209">
    <property type="term" value="P:AMP salvage"/>
    <property type="evidence" value="ECO:0007669"/>
    <property type="project" value="UniProtKB-UniRule"/>
</dbReference>
<dbReference type="CDD" id="cd01428">
    <property type="entry name" value="ADK"/>
    <property type="match status" value="1"/>
</dbReference>
<dbReference type="FunFam" id="3.40.50.300:FF:000106">
    <property type="entry name" value="Adenylate kinase mitochondrial"/>
    <property type="match status" value="1"/>
</dbReference>
<dbReference type="Gene3D" id="3.40.50.300">
    <property type="entry name" value="P-loop containing nucleotide triphosphate hydrolases"/>
    <property type="match status" value="1"/>
</dbReference>
<dbReference type="HAMAP" id="MF_00235">
    <property type="entry name" value="Adenylate_kinase_Adk"/>
    <property type="match status" value="1"/>
</dbReference>
<dbReference type="InterPro" id="IPR006259">
    <property type="entry name" value="Adenyl_kin_sub"/>
</dbReference>
<dbReference type="InterPro" id="IPR000850">
    <property type="entry name" value="Adenylat/UMP-CMP_kin"/>
</dbReference>
<dbReference type="InterPro" id="IPR033690">
    <property type="entry name" value="Adenylat_kinase_CS"/>
</dbReference>
<dbReference type="InterPro" id="IPR007862">
    <property type="entry name" value="Adenylate_kinase_lid-dom"/>
</dbReference>
<dbReference type="InterPro" id="IPR027417">
    <property type="entry name" value="P-loop_NTPase"/>
</dbReference>
<dbReference type="NCBIfam" id="TIGR01351">
    <property type="entry name" value="adk"/>
    <property type="match status" value="1"/>
</dbReference>
<dbReference type="NCBIfam" id="NF001380">
    <property type="entry name" value="PRK00279.1-2"/>
    <property type="match status" value="1"/>
</dbReference>
<dbReference type="NCBIfam" id="NF001381">
    <property type="entry name" value="PRK00279.1-3"/>
    <property type="match status" value="1"/>
</dbReference>
<dbReference type="NCBIfam" id="NF011100">
    <property type="entry name" value="PRK14527.1"/>
    <property type="match status" value="1"/>
</dbReference>
<dbReference type="PANTHER" id="PTHR23359">
    <property type="entry name" value="NUCLEOTIDE KINASE"/>
    <property type="match status" value="1"/>
</dbReference>
<dbReference type="Pfam" id="PF00406">
    <property type="entry name" value="ADK"/>
    <property type="match status" value="1"/>
</dbReference>
<dbReference type="Pfam" id="PF05191">
    <property type="entry name" value="ADK_lid"/>
    <property type="match status" value="1"/>
</dbReference>
<dbReference type="PRINTS" id="PR00094">
    <property type="entry name" value="ADENYLTKNASE"/>
</dbReference>
<dbReference type="SUPFAM" id="SSF52540">
    <property type="entry name" value="P-loop containing nucleoside triphosphate hydrolases"/>
    <property type="match status" value="1"/>
</dbReference>
<dbReference type="PROSITE" id="PS00113">
    <property type="entry name" value="ADENYLATE_KINASE"/>
    <property type="match status" value="1"/>
</dbReference>
<proteinExistence type="inferred from homology"/>
<accession>B1HMV9</accession>
<protein>
    <recommendedName>
        <fullName evidence="1">Adenylate kinase</fullName>
        <shortName evidence="1">AK</shortName>
        <ecNumber evidence="1">2.7.4.3</ecNumber>
    </recommendedName>
    <alternativeName>
        <fullName evidence="1">ATP-AMP transphosphorylase</fullName>
    </alternativeName>
    <alternativeName>
        <fullName evidence="1">ATP:AMP phosphotransferase</fullName>
    </alternativeName>
    <alternativeName>
        <fullName evidence="1">Adenylate monophosphate kinase</fullName>
    </alternativeName>
</protein>
<reference key="1">
    <citation type="journal article" date="2008" name="J. Bacteriol.">
        <title>Complete genome sequence of the mosquitocidal bacterium Bacillus sphaericus C3-41 and comparison with those of closely related Bacillus species.</title>
        <authorList>
            <person name="Hu X."/>
            <person name="Fan W."/>
            <person name="Han B."/>
            <person name="Liu H."/>
            <person name="Zheng D."/>
            <person name="Li Q."/>
            <person name="Dong W."/>
            <person name="Yan J."/>
            <person name="Gao M."/>
            <person name="Berry C."/>
            <person name="Yuan Z."/>
        </authorList>
    </citation>
    <scope>NUCLEOTIDE SEQUENCE [LARGE SCALE GENOMIC DNA]</scope>
    <source>
        <strain>C3-41</strain>
    </source>
</reference>
<keyword id="KW-0067">ATP-binding</keyword>
<keyword id="KW-0963">Cytoplasm</keyword>
<keyword id="KW-0418">Kinase</keyword>
<keyword id="KW-0479">Metal-binding</keyword>
<keyword id="KW-0545">Nucleotide biosynthesis</keyword>
<keyword id="KW-0547">Nucleotide-binding</keyword>
<keyword id="KW-0808">Transferase</keyword>
<keyword id="KW-0862">Zinc</keyword>
<feature type="chain" id="PRO_1000100581" description="Adenylate kinase">
    <location>
        <begin position="1"/>
        <end position="217"/>
    </location>
</feature>
<feature type="region of interest" description="NMP" evidence="1">
    <location>
        <begin position="30"/>
        <end position="59"/>
    </location>
</feature>
<feature type="region of interest" description="LID" evidence="1">
    <location>
        <begin position="126"/>
        <end position="163"/>
    </location>
</feature>
<feature type="binding site" evidence="1">
    <location>
        <begin position="10"/>
        <end position="15"/>
    </location>
    <ligand>
        <name>ATP</name>
        <dbReference type="ChEBI" id="CHEBI:30616"/>
    </ligand>
</feature>
<feature type="binding site" evidence="1">
    <location>
        <position position="31"/>
    </location>
    <ligand>
        <name>AMP</name>
        <dbReference type="ChEBI" id="CHEBI:456215"/>
    </ligand>
</feature>
<feature type="binding site" evidence="1">
    <location>
        <position position="36"/>
    </location>
    <ligand>
        <name>AMP</name>
        <dbReference type="ChEBI" id="CHEBI:456215"/>
    </ligand>
</feature>
<feature type="binding site" evidence="1">
    <location>
        <begin position="57"/>
        <end position="59"/>
    </location>
    <ligand>
        <name>AMP</name>
        <dbReference type="ChEBI" id="CHEBI:456215"/>
    </ligand>
</feature>
<feature type="binding site" evidence="1">
    <location>
        <begin position="85"/>
        <end position="88"/>
    </location>
    <ligand>
        <name>AMP</name>
        <dbReference type="ChEBI" id="CHEBI:456215"/>
    </ligand>
</feature>
<feature type="binding site" evidence="1">
    <location>
        <position position="92"/>
    </location>
    <ligand>
        <name>AMP</name>
        <dbReference type="ChEBI" id="CHEBI:456215"/>
    </ligand>
</feature>
<feature type="binding site" evidence="1">
    <location>
        <position position="127"/>
    </location>
    <ligand>
        <name>ATP</name>
        <dbReference type="ChEBI" id="CHEBI:30616"/>
    </ligand>
</feature>
<feature type="binding site" evidence="1">
    <location>
        <position position="130"/>
    </location>
    <ligand>
        <name>Zn(2+)</name>
        <dbReference type="ChEBI" id="CHEBI:29105"/>
        <note>structural</note>
    </ligand>
</feature>
<feature type="binding site" evidence="1">
    <location>
        <position position="133"/>
    </location>
    <ligand>
        <name>Zn(2+)</name>
        <dbReference type="ChEBI" id="CHEBI:29105"/>
        <note>structural</note>
    </ligand>
</feature>
<feature type="binding site" evidence="1">
    <location>
        <begin position="136"/>
        <end position="137"/>
    </location>
    <ligand>
        <name>ATP</name>
        <dbReference type="ChEBI" id="CHEBI:30616"/>
    </ligand>
</feature>
<feature type="binding site" evidence="1">
    <location>
        <position position="150"/>
    </location>
    <ligand>
        <name>Zn(2+)</name>
        <dbReference type="ChEBI" id="CHEBI:29105"/>
        <note>structural</note>
    </ligand>
</feature>
<feature type="binding site" evidence="1">
    <location>
        <position position="153"/>
    </location>
    <ligand>
        <name>Zn(2+)</name>
        <dbReference type="ChEBI" id="CHEBI:29105"/>
        <note>structural</note>
    </ligand>
</feature>
<feature type="binding site" evidence="1">
    <location>
        <position position="160"/>
    </location>
    <ligand>
        <name>AMP</name>
        <dbReference type="ChEBI" id="CHEBI:456215"/>
    </ligand>
</feature>
<feature type="binding site" evidence="1">
    <location>
        <position position="171"/>
    </location>
    <ligand>
        <name>AMP</name>
        <dbReference type="ChEBI" id="CHEBI:456215"/>
    </ligand>
</feature>
<feature type="binding site" evidence="1">
    <location>
        <position position="199"/>
    </location>
    <ligand>
        <name>ATP</name>
        <dbReference type="ChEBI" id="CHEBI:30616"/>
    </ligand>
</feature>